<organism>
    <name type="scientific">Acinetobacter baumannii (strain SDF)</name>
    <dbReference type="NCBI Taxonomy" id="509170"/>
    <lineage>
        <taxon>Bacteria</taxon>
        <taxon>Pseudomonadati</taxon>
        <taxon>Pseudomonadota</taxon>
        <taxon>Gammaproteobacteria</taxon>
        <taxon>Moraxellales</taxon>
        <taxon>Moraxellaceae</taxon>
        <taxon>Acinetobacter</taxon>
        <taxon>Acinetobacter calcoaceticus/baumannii complex</taxon>
    </lineage>
</organism>
<gene>
    <name evidence="1" type="primary">tig</name>
    <name type="ordered locus">ABSDF3029</name>
</gene>
<proteinExistence type="inferred from homology"/>
<sequence>MQVTTEAVSGVARRLNVSVPTSRINEQFEARLKRTAKTVKINGFRPGKVPANVVRREYGASIYQEVVNDIIRDSVFEAIQQEKINAVGTPNIEKVEHKEDALVFEATVEVYPEVEVKAFDGLEVERKTAEIKDADVDTMIENLQKQRQTWAVTKGMAKKDMQVTFDFEGSIDGEKFEGGSAEDFKLVLGSGRMIPGFEDGIIGMKAGEEKVIDVTFPEDYQAENLAGKAAQFKITVKQVEKPKLPEIDAEFLKIFGVSEEEGIEKLKADVRKNMEREVRNGLRNQVKQAAFDALVAANEIEVPAAMVAQEIDRQRQQMVQQFTQQFGGAGAQSFDKSMLPDELFKEQAERSVKLGVLVSKVLADAKLEVDQARVDAYIDDMASSYEDPTEVIEYFKNDAQQRAQIEAVVLEDQVVDHILASAKVTDKAVSYEDLLKEQQARRMG</sequence>
<evidence type="ECO:0000255" key="1">
    <source>
        <dbReference type="HAMAP-Rule" id="MF_00303"/>
    </source>
</evidence>
<protein>
    <recommendedName>
        <fullName evidence="1">Trigger factor</fullName>
        <shortName evidence="1">TF</shortName>
        <ecNumber evidence="1">5.2.1.8</ecNumber>
    </recommendedName>
    <alternativeName>
        <fullName evidence="1">PPIase</fullName>
    </alternativeName>
</protein>
<keyword id="KW-0131">Cell cycle</keyword>
<keyword id="KW-0132">Cell division</keyword>
<keyword id="KW-0143">Chaperone</keyword>
<keyword id="KW-0963">Cytoplasm</keyword>
<keyword id="KW-0413">Isomerase</keyword>
<keyword id="KW-0697">Rotamase</keyword>
<feature type="chain" id="PRO_1000115492" description="Trigger factor">
    <location>
        <begin position="1"/>
        <end position="444"/>
    </location>
</feature>
<feature type="domain" description="PPIase FKBP-type" evidence="1">
    <location>
        <begin position="160"/>
        <end position="245"/>
    </location>
</feature>
<accession>B0VKU6</accession>
<comment type="function">
    <text evidence="1">Involved in protein export. Acts as a chaperone by maintaining the newly synthesized protein in an open conformation. Functions as a peptidyl-prolyl cis-trans isomerase.</text>
</comment>
<comment type="catalytic activity">
    <reaction evidence="1">
        <text>[protein]-peptidylproline (omega=180) = [protein]-peptidylproline (omega=0)</text>
        <dbReference type="Rhea" id="RHEA:16237"/>
        <dbReference type="Rhea" id="RHEA-COMP:10747"/>
        <dbReference type="Rhea" id="RHEA-COMP:10748"/>
        <dbReference type="ChEBI" id="CHEBI:83833"/>
        <dbReference type="ChEBI" id="CHEBI:83834"/>
        <dbReference type="EC" id="5.2.1.8"/>
    </reaction>
</comment>
<comment type="subcellular location">
    <subcellularLocation>
        <location>Cytoplasm</location>
    </subcellularLocation>
    <text evidence="1">About half TF is bound to the ribosome near the polypeptide exit tunnel while the other half is free in the cytoplasm.</text>
</comment>
<comment type="domain">
    <text evidence="1">Consists of 3 domains; the N-terminus binds the ribosome, the middle domain has PPIase activity, while the C-terminus has intrinsic chaperone activity on its own.</text>
</comment>
<comment type="similarity">
    <text evidence="1">Belongs to the FKBP-type PPIase family. Tig subfamily.</text>
</comment>
<reference key="1">
    <citation type="journal article" date="2008" name="PLoS ONE">
        <title>Comparative analysis of Acinetobacters: three genomes for three lifestyles.</title>
        <authorList>
            <person name="Vallenet D."/>
            <person name="Nordmann P."/>
            <person name="Barbe V."/>
            <person name="Poirel L."/>
            <person name="Mangenot S."/>
            <person name="Bataille E."/>
            <person name="Dossat C."/>
            <person name="Gas S."/>
            <person name="Kreimeyer A."/>
            <person name="Lenoble P."/>
            <person name="Oztas S."/>
            <person name="Poulain J."/>
            <person name="Segurens B."/>
            <person name="Robert C."/>
            <person name="Abergel C."/>
            <person name="Claverie J.-M."/>
            <person name="Raoult D."/>
            <person name="Medigue C."/>
            <person name="Weissenbach J."/>
            <person name="Cruveiller S."/>
        </authorList>
    </citation>
    <scope>NUCLEOTIDE SEQUENCE [LARGE SCALE GENOMIC DNA]</scope>
    <source>
        <strain>SDF</strain>
    </source>
</reference>
<dbReference type="EC" id="5.2.1.8" evidence="1"/>
<dbReference type="EMBL" id="CU468230">
    <property type="protein sequence ID" value="CAP02315.1"/>
    <property type="molecule type" value="Genomic_DNA"/>
</dbReference>
<dbReference type="SMR" id="B0VKU6"/>
<dbReference type="KEGG" id="abm:ABSDF3029"/>
<dbReference type="HOGENOM" id="CLU_033058_2_0_6"/>
<dbReference type="Proteomes" id="UP000001741">
    <property type="component" value="Chromosome"/>
</dbReference>
<dbReference type="GO" id="GO:0005737">
    <property type="term" value="C:cytoplasm"/>
    <property type="evidence" value="ECO:0007669"/>
    <property type="project" value="UniProtKB-SubCell"/>
</dbReference>
<dbReference type="GO" id="GO:0003755">
    <property type="term" value="F:peptidyl-prolyl cis-trans isomerase activity"/>
    <property type="evidence" value="ECO:0007669"/>
    <property type="project" value="UniProtKB-UniRule"/>
</dbReference>
<dbReference type="GO" id="GO:0044183">
    <property type="term" value="F:protein folding chaperone"/>
    <property type="evidence" value="ECO:0007669"/>
    <property type="project" value="TreeGrafter"/>
</dbReference>
<dbReference type="GO" id="GO:0043022">
    <property type="term" value="F:ribosome binding"/>
    <property type="evidence" value="ECO:0007669"/>
    <property type="project" value="TreeGrafter"/>
</dbReference>
<dbReference type="GO" id="GO:0051083">
    <property type="term" value="P:'de novo' cotranslational protein folding"/>
    <property type="evidence" value="ECO:0007669"/>
    <property type="project" value="TreeGrafter"/>
</dbReference>
<dbReference type="GO" id="GO:0051301">
    <property type="term" value="P:cell division"/>
    <property type="evidence" value="ECO:0007669"/>
    <property type="project" value="UniProtKB-KW"/>
</dbReference>
<dbReference type="GO" id="GO:0061077">
    <property type="term" value="P:chaperone-mediated protein folding"/>
    <property type="evidence" value="ECO:0007669"/>
    <property type="project" value="TreeGrafter"/>
</dbReference>
<dbReference type="GO" id="GO:0015031">
    <property type="term" value="P:protein transport"/>
    <property type="evidence" value="ECO:0007669"/>
    <property type="project" value="UniProtKB-UniRule"/>
</dbReference>
<dbReference type="GO" id="GO:0043335">
    <property type="term" value="P:protein unfolding"/>
    <property type="evidence" value="ECO:0007669"/>
    <property type="project" value="TreeGrafter"/>
</dbReference>
<dbReference type="FunFam" id="3.10.50.40:FF:000001">
    <property type="entry name" value="Trigger factor"/>
    <property type="match status" value="1"/>
</dbReference>
<dbReference type="Gene3D" id="3.10.50.40">
    <property type="match status" value="1"/>
</dbReference>
<dbReference type="Gene3D" id="3.30.70.1050">
    <property type="entry name" value="Trigger factor ribosome-binding domain"/>
    <property type="match status" value="1"/>
</dbReference>
<dbReference type="Gene3D" id="1.10.3120.10">
    <property type="entry name" value="Trigger factor, C-terminal domain"/>
    <property type="match status" value="1"/>
</dbReference>
<dbReference type="HAMAP" id="MF_00303">
    <property type="entry name" value="Trigger_factor_Tig"/>
    <property type="match status" value="1"/>
</dbReference>
<dbReference type="InterPro" id="IPR046357">
    <property type="entry name" value="PPIase_dom_sf"/>
</dbReference>
<dbReference type="InterPro" id="IPR001179">
    <property type="entry name" value="PPIase_FKBP_dom"/>
</dbReference>
<dbReference type="InterPro" id="IPR005215">
    <property type="entry name" value="Trig_fac"/>
</dbReference>
<dbReference type="InterPro" id="IPR008880">
    <property type="entry name" value="Trigger_fac_C"/>
</dbReference>
<dbReference type="InterPro" id="IPR037041">
    <property type="entry name" value="Trigger_fac_C_sf"/>
</dbReference>
<dbReference type="InterPro" id="IPR008881">
    <property type="entry name" value="Trigger_fac_ribosome-bd_bac"/>
</dbReference>
<dbReference type="InterPro" id="IPR036611">
    <property type="entry name" value="Trigger_fac_ribosome-bd_sf"/>
</dbReference>
<dbReference type="InterPro" id="IPR027304">
    <property type="entry name" value="Trigger_fact/SurA_dom_sf"/>
</dbReference>
<dbReference type="NCBIfam" id="TIGR00115">
    <property type="entry name" value="tig"/>
    <property type="match status" value="1"/>
</dbReference>
<dbReference type="PANTHER" id="PTHR30560">
    <property type="entry name" value="TRIGGER FACTOR CHAPERONE AND PEPTIDYL-PROLYL CIS/TRANS ISOMERASE"/>
    <property type="match status" value="1"/>
</dbReference>
<dbReference type="PANTHER" id="PTHR30560:SF3">
    <property type="entry name" value="TRIGGER FACTOR-LIKE PROTEIN TIG, CHLOROPLASTIC"/>
    <property type="match status" value="1"/>
</dbReference>
<dbReference type="Pfam" id="PF00254">
    <property type="entry name" value="FKBP_C"/>
    <property type="match status" value="1"/>
</dbReference>
<dbReference type="Pfam" id="PF05698">
    <property type="entry name" value="Trigger_C"/>
    <property type="match status" value="1"/>
</dbReference>
<dbReference type="Pfam" id="PF05697">
    <property type="entry name" value="Trigger_N"/>
    <property type="match status" value="1"/>
</dbReference>
<dbReference type="PIRSF" id="PIRSF003095">
    <property type="entry name" value="Trigger_factor"/>
    <property type="match status" value="1"/>
</dbReference>
<dbReference type="SUPFAM" id="SSF54534">
    <property type="entry name" value="FKBP-like"/>
    <property type="match status" value="1"/>
</dbReference>
<dbReference type="SUPFAM" id="SSF109998">
    <property type="entry name" value="Triger factor/SurA peptide-binding domain-like"/>
    <property type="match status" value="1"/>
</dbReference>
<dbReference type="SUPFAM" id="SSF102735">
    <property type="entry name" value="Trigger factor ribosome-binding domain"/>
    <property type="match status" value="1"/>
</dbReference>
<dbReference type="PROSITE" id="PS50059">
    <property type="entry name" value="FKBP_PPIASE"/>
    <property type="match status" value="1"/>
</dbReference>
<name>TIG_ACIBS</name>